<reference key="1">
    <citation type="journal article" date="2007" name="Proc. Natl. Acad. Sci. U.S.A.">
        <title>Independent sorting-out of thousands of duplicated gene pairs in two yeast species descended from a whole-genome duplication.</title>
        <authorList>
            <person name="Scannell D.R."/>
            <person name="Frank A.C."/>
            <person name="Conant G.C."/>
            <person name="Byrne K.P."/>
            <person name="Woolfit M."/>
            <person name="Wolfe K.H."/>
        </authorList>
    </citation>
    <scope>NUCLEOTIDE SEQUENCE [LARGE SCALE GENOMIC DNA]</scope>
    <source>
        <strain>ATCC 22028 / DSM 70294 / BCRC 21397 / CBS 2163 / NBRC 10782 / NRRL Y-8283 / UCD 57-17</strain>
    </source>
</reference>
<protein>
    <recommendedName>
        <fullName>Autophagy-related protein 20</fullName>
    </recommendedName>
</protein>
<keyword id="KW-0072">Autophagy</keyword>
<keyword id="KW-0175">Coiled coil</keyword>
<keyword id="KW-0967">Endosome</keyword>
<keyword id="KW-0446">Lipid-binding</keyword>
<keyword id="KW-0472">Membrane</keyword>
<keyword id="KW-0653">Protein transport</keyword>
<keyword id="KW-1185">Reference proteome</keyword>
<keyword id="KW-0813">Transport</keyword>
<name>ATG20_VANPO</name>
<evidence type="ECO:0000250" key="1"/>
<evidence type="ECO:0000255" key="2"/>
<evidence type="ECO:0000255" key="3">
    <source>
        <dbReference type="PROSITE-ProRule" id="PRU00147"/>
    </source>
</evidence>
<evidence type="ECO:0000256" key="4">
    <source>
        <dbReference type="SAM" id="MobiDB-lite"/>
    </source>
</evidence>
<evidence type="ECO:0000305" key="5"/>
<feature type="chain" id="PRO_0000317992" description="Autophagy-related protein 20">
    <location>
        <begin position="1"/>
        <end position="667"/>
    </location>
</feature>
<feature type="domain" description="PX" evidence="3">
    <location>
        <begin position="185"/>
        <end position="331"/>
    </location>
</feature>
<feature type="region of interest" description="Disordered" evidence="4">
    <location>
        <begin position="1"/>
        <end position="94"/>
    </location>
</feature>
<feature type="region of interest" description="Disordered" evidence="4">
    <location>
        <begin position="524"/>
        <end position="562"/>
    </location>
</feature>
<feature type="coiled-coil region" evidence="2">
    <location>
        <begin position="588"/>
        <end position="652"/>
    </location>
</feature>
<feature type="compositionally biased region" description="Low complexity" evidence="4">
    <location>
        <begin position="38"/>
        <end position="47"/>
    </location>
</feature>
<feature type="compositionally biased region" description="Polar residues" evidence="4">
    <location>
        <begin position="55"/>
        <end position="67"/>
    </location>
</feature>
<feature type="compositionally biased region" description="Acidic residues" evidence="4">
    <location>
        <begin position="76"/>
        <end position="85"/>
    </location>
</feature>
<feature type="compositionally biased region" description="Polar residues" evidence="4">
    <location>
        <begin position="532"/>
        <end position="545"/>
    </location>
</feature>
<feature type="compositionally biased region" description="Low complexity" evidence="4">
    <location>
        <begin position="549"/>
        <end position="560"/>
    </location>
</feature>
<feature type="binding site" evidence="1">
    <location>
        <position position="222"/>
    </location>
    <ligand>
        <name>a 1,2-diacyl-sn-glycero-3-phospho-(1D-myo-inositol-3-phosphate)</name>
        <dbReference type="ChEBI" id="CHEBI:58088"/>
    </ligand>
</feature>
<feature type="binding site" evidence="1">
    <location>
        <position position="224"/>
    </location>
    <ligand>
        <name>a 1,2-diacyl-sn-glycero-3-phospho-(1D-myo-inositol-3-phosphate)</name>
        <dbReference type="ChEBI" id="CHEBI:58088"/>
    </ligand>
</feature>
<feature type="binding site" evidence="1">
    <location>
        <position position="248"/>
    </location>
    <ligand>
        <name>a 1,2-diacyl-sn-glycero-3-phospho-(1D-myo-inositol-3-phosphate)</name>
        <dbReference type="ChEBI" id="CHEBI:58088"/>
    </ligand>
</feature>
<feature type="binding site" evidence="1">
    <location>
        <position position="297"/>
    </location>
    <ligand>
        <name>a 1,2-diacyl-sn-glycero-3-phospho-(1D-myo-inositol-3-phosphate)</name>
        <dbReference type="ChEBI" id="CHEBI:58088"/>
    </ligand>
</feature>
<proteinExistence type="inferred from homology"/>
<accession>A7TIP6</accession>
<comment type="function">
    <text evidence="1">Required for cytoplasm to vacuole transport (Cvt), pexophagy and mitophagy. Also involved in endoplasmic reticulum-specific autophagic process and is essential for the survival of cells subjected to severe ER stress. Functions in protein retrieval from the endocytic pathway (By similarity).</text>
</comment>
<comment type="subcellular location">
    <subcellularLocation>
        <location evidence="1">Endosome membrane</location>
        <topology evidence="1">Peripheral membrane protein</topology>
    </subcellularLocation>
    <subcellularLocation>
        <location evidence="1">Preautophagosomal structure membrane</location>
        <topology evidence="1">Peripheral membrane protein</topology>
    </subcellularLocation>
</comment>
<comment type="domain">
    <text evidence="1">The PX domain binds phosphatidylinositol 3-phosphate which is necessary for peripheral membrane localization of ATG20 to the perivacuolar punctate structures.</text>
</comment>
<comment type="similarity">
    <text evidence="5">Belongs to the sorting nexin family.</text>
</comment>
<dbReference type="EMBL" id="DS480397">
    <property type="protein sequence ID" value="EDO17838.1"/>
    <property type="molecule type" value="Genomic_DNA"/>
</dbReference>
<dbReference type="RefSeq" id="XP_001645696.1">
    <property type="nucleotide sequence ID" value="XM_001645646.1"/>
</dbReference>
<dbReference type="FunCoup" id="A7TIP6">
    <property type="interactions" value="164"/>
</dbReference>
<dbReference type="STRING" id="436907.A7TIP6"/>
<dbReference type="GeneID" id="5546092"/>
<dbReference type="KEGG" id="vpo:Kpol_1043p28"/>
<dbReference type="eggNOG" id="KOG2273">
    <property type="taxonomic scope" value="Eukaryota"/>
</dbReference>
<dbReference type="HOGENOM" id="CLU_014456_2_1_1"/>
<dbReference type="InParanoid" id="A7TIP6"/>
<dbReference type="OMA" id="ICNTDIT"/>
<dbReference type="OrthoDB" id="289314at2759"/>
<dbReference type="PhylomeDB" id="A7TIP6"/>
<dbReference type="Proteomes" id="UP000000267">
    <property type="component" value="Unassembled WGS sequence"/>
</dbReference>
<dbReference type="GO" id="GO:0010009">
    <property type="term" value="C:cytoplasmic side of endosome membrane"/>
    <property type="evidence" value="ECO:0007669"/>
    <property type="project" value="EnsemblFungi"/>
</dbReference>
<dbReference type="GO" id="GO:0005829">
    <property type="term" value="C:cytosol"/>
    <property type="evidence" value="ECO:0007669"/>
    <property type="project" value="GOC"/>
</dbReference>
<dbReference type="GO" id="GO:0034045">
    <property type="term" value="C:phagophore assembly site membrane"/>
    <property type="evidence" value="ECO:0007669"/>
    <property type="project" value="UniProtKB-SubCell"/>
</dbReference>
<dbReference type="GO" id="GO:0032266">
    <property type="term" value="F:phosphatidylinositol-3-phosphate binding"/>
    <property type="evidence" value="ECO:0007669"/>
    <property type="project" value="EnsemblFungi"/>
</dbReference>
<dbReference type="GO" id="GO:0000422">
    <property type="term" value="P:autophagy of mitochondrion"/>
    <property type="evidence" value="ECO:0007669"/>
    <property type="project" value="EnsemblFungi"/>
</dbReference>
<dbReference type="GO" id="GO:0032258">
    <property type="term" value="P:cytoplasm to vacuole targeting by the Cvt pathway"/>
    <property type="evidence" value="ECO:0007669"/>
    <property type="project" value="EnsemblFungi"/>
</dbReference>
<dbReference type="GO" id="GO:0034498">
    <property type="term" value="P:early endosome to Golgi transport"/>
    <property type="evidence" value="ECO:0007669"/>
    <property type="project" value="EnsemblFungi"/>
</dbReference>
<dbReference type="GO" id="GO:0016236">
    <property type="term" value="P:macroautophagy"/>
    <property type="evidence" value="ECO:0007669"/>
    <property type="project" value="EnsemblFungi"/>
</dbReference>
<dbReference type="CDD" id="cd07629">
    <property type="entry name" value="BAR_Atg20p"/>
    <property type="match status" value="1"/>
</dbReference>
<dbReference type="CDD" id="cd06867">
    <property type="entry name" value="PX_SNX41_42"/>
    <property type="match status" value="1"/>
</dbReference>
<dbReference type="Gene3D" id="1.20.1270.60">
    <property type="entry name" value="Arfaptin homology (AH) domain/BAR domain"/>
    <property type="match status" value="1"/>
</dbReference>
<dbReference type="Gene3D" id="3.30.1520.10">
    <property type="entry name" value="Phox-like domain"/>
    <property type="match status" value="1"/>
</dbReference>
<dbReference type="InterPro" id="IPR027267">
    <property type="entry name" value="AH/BAR_dom_sf"/>
</dbReference>
<dbReference type="InterPro" id="IPR001683">
    <property type="entry name" value="PX_dom"/>
</dbReference>
<dbReference type="InterPro" id="IPR036871">
    <property type="entry name" value="PX_dom_sf"/>
</dbReference>
<dbReference type="InterPro" id="IPR044106">
    <property type="entry name" value="PX_Snx41/Atg20"/>
</dbReference>
<dbReference type="InterPro" id="IPR051079">
    <property type="entry name" value="Sorting_Nexin_Autophagy"/>
</dbReference>
<dbReference type="PANTHER" id="PTHR46979:SF1">
    <property type="entry name" value="AUTOPHAGY-RELATED PROTEIN 20"/>
    <property type="match status" value="1"/>
</dbReference>
<dbReference type="PANTHER" id="PTHR46979">
    <property type="entry name" value="SORTING NEXIN-41"/>
    <property type="match status" value="1"/>
</dbReference>
<dbReference type="Pfam" id="PF00787">
    <property type="entry name" value="PX"/>
    <property type="match status" value="1"/>
</dbReference>
<dbReference type="SMART" id="SM00312">
    <property type="entry name" value="PX"/>
    <property type="match status" value="1"/>
</dbReference>
<dbReference type="SUPFAM" id="SSF64268">
    <property type="entry name" value="PX domain"/>
    <property type="match status" value="1"/>
</dbReference>
<dbReference type="PROSITE" id="PS50195">
    <property type="entry name" value="PX"/>
    <property type="match status" value="1"/>
</dbReference>
<sequence>MKQKKNRFGSGKRITDQSSVDGDLIAPGNSSMDKRRNSSSSRSSSTQESKELTESLASVHTSDMHQSNIHERIDGDDNPFLDQDDESFKSTRANTSATKLTDVVNPNAEYKDNDSDNDEEILTATAPDTSITEGIVSTEADGGNDVVTASVEDKEGTVTDTAVGLDNANNTVDQKVKESIIPDIKLINDRVQILEANKVSEGQGRAYVAYTIKWGDQSVRRRYSDFESLRSVLMKLFPTSLLPPIPEKQTLKNYSKSIAGSKSNYLLPSEGTGSVDLVLSVINGTVTNNDEKLIRHRIRMLTSFLNKLLQDEEILKTPIIYDFLDPNNINWNDFINSSATFSMLPKSVLQCNPLDPTNTTRIHACLPVPSTSHILPSKEKVSDTKTIERKDGFDIIEQEHKQYESLLKSGFYKHNTQITKSLYGMQHDMKDLSDTFAHFASAQACEAELAEQLTYMSNAYDDAASNLEALVGLLYYNINEPLGESVRMAGSAKELIKYRKLKGVQLEILINSLESKRQQLHKLELQRGVQPRNGNTASGASGNDESSVKKPQASKSQSSSYGGKFLNRFNKIAAMVKETINYQEQDPQTTMANLIKEIEQLNESEQVARHDLEDISKIIKEDRLTKFSEEREKELNEILRNYSKYLKDYAKKNLELWKEIKTRQEQL</sequence>
<gene>
    <name type="primary">ATG20</name>
    <name type="ORF">Kpol_1043p28</name>
</gene>
<organism>
    <name type="scientific">Vanderwaltozyma polyspora (strain ATCC 22028 / DSM 70294 / BCRC 21397 / CBS 2163 / NBRC 10782 / NRRL Y-8283 / UCD 57-17)</name>
    <name type="common">Kluyveromyces polysporus</name>
    <dbReference type="NCBI Taxonomy" id="436907"/>
    <lineage>
        <taxon>Eukaryota</taxon>
        <taxon>Fungi</taxon>
        <taxon>Dikarya</taxon>
        <taxon>Ascomycota</taxon>
        <taxon>Saccharomycotina</taxon>
        <taxon>Saccharomycetes</taxon>
        <taxon>Saccharomycetales</taxon>
        <taxon>Saccharomycetaceae</taxon>
        <taxon>Vanderwaltozyma</taxon>
    </lineage>
</organism>